<name>ARR6_ARATH</name>
<dbReference type="EMBL" id="AB008489">
    <property type="protein sequence ID" value="BAA34728.1"/>
    <property type="molecule type" value="mRNA"/>
</dbReference>
<dbReference type="EMBL" id="AB008491">
    <property type="protein sequence ID" value="BAA34730.1"/>
    <property type="status" value="ALT_SEQ"/>
    <property type="molecule type" value="Genomic_DNA"/>
</dbReference>
<dbReference type="EMBL" id="AB009053">
    <property type="protein sequence ID" value="BAB10861.1"/>
    <property type="molecule type" value="Genomic_DNA"/>
</dbReference>
<dbReference type="EMBL" id="CP002688">
    <property type="protein sequence ID" value="AED97674.1"/>
    <property type="molecule type" value="Genomic_DNA"/>
</dbReference>
<dbReference type="EMBL" id="BT004799">
    <property type="protein sequence ID" value="AAO44065.1"/>
    <property type="molecule type" value="mRNA"/>
</dbReference>
<dbReference type="PIR" id="T50857">
    <property type="entry name" value="T50857"/>
</dbReference>
<dbReference type="PIR" id="T50860">
    <property type="entry name" value="T50860"/>
</dbReference>
<dbReference type="RefSeq" id="NP_201097.1">
    <property type="nucleotide sequence ID" value="NM_125686.3"/>
</dbReference>
<dbReference type="SMR" id="Q9ZWS6"/>
<dbReference type="BioGRID" id="21655">
    <property type="interactions" value="16"/>
</dbReference>
<dbReference type="FunCoup" id="Q9ZWS6">
    <property type="interactions" value="295"/>
</dbReference>
<dbReference type="IntAct" id="Q9ZWS6">
    <property type="interactions" value="17"/>
</dbReference>
<dbReference type="STRING" id="3702.Q9ZWS6"/>
<dbReference type="PaxDb" id="3702-AT5G62920.1"/>
<dbReference type="ProteomicsDB" id="246673"/>
<dbReference type="EnsemblPlants" id="AT5G62920.1">
    <property type="protein sequence ID" value="AT5G62920.1"/>
    <property type="gene ID" value="AT5G62920"/>
</dbReference>
<dbReference type="GeneID" id="836412"/>
<dbReference type="Gramene" id="AT5G62920.1">
    <property type="protein sequence ID" value="AT5G62920.1"/>
    <property type="gene ID" value="AT5G62920"/>
</dbReference>
<dbReference type="KEGG" id="ath:AT5G62920"/>
<dbReference type="Araport" id="AT5G62920"/>
<dbReference type="TAIR" id="AT5G62920">
    <property type="gene designation" value="ARR6"/>
</dbReference>
<dbReference type="eggNOG" id="KOG1601">
    <property type="taxonomic scope" value="Eukaryota"/>
</dbReference>
<dbReference type="HOGENOM" id="CLU_000445_69_5_1"/>
<dbReference type="InParanoid" id="Q9ZWS6"/>
<dbReference type="OMA" id="SHEDYSY"/>
<dbReference type="OrthoDB" id="60033at2759"/>
<dbReference type="PhylomeDB" id="Q9ZWS6"/>
<dbReference type="PRO" id="PR:Q9ZWS6"/>
<dbReference type="Proteomes" id="UP000006548">
    <property type="component" value="Chromosome 5"/>
</dbReference>
<dbReference type="ExpressionAtlas" id="Q9ZWS6">
    <property type="expression patterns" value="baseline and differential"/>
</dbReference>
<dbReference type="GO" id="GO:0005634">
    <property type="term" value="C:nucleus"/>
    <property type="evidence" value="ECO:0000314"/>
    <property type="project" value="TAIR"/>
</dbReference>
<dbReference type="GO" id="GO:0000156">
    <property type="term" value="F:phosphorelay response regulator activity"/>
    <property type="evidence" value="ECO:0000250"/>
    <property type="project" value="TAIR"/>
</dbReference>
<dbReference type="GO" id="GO:0009736">
    <property type="term" value="P:cytokinin-activated signaling pathway"/>
    <property type="evidence" value="ECO:0000315"/>
    <property type="project" value="TAIR"/>
</dbReference>
<dbReference type="GO" id="GO:0006355">
    <property type="term" value="P:regulation of DNA-templated transcription"/>
    <property type="evidence" value="ECO:0000304"/>
    <property type="project" value="TAIR"/>
</dbReference>
<dbReference type="GO" id="GO:0009735">
    <property type="term" value="P:response to cytokinin"/>
    <property type="evidence" value="ECO:0000270"/>
    <property type="project" value="TAIR"/>
</dbReference>
<dbReference type="CDD" id="cd17581">
    <property type="entry name" value="REC_typeA_ARR"/>
    <property type="match status" value="1"/>
</dbReference>
<dbReference type="FunFam" id="3.40.50.2300:FF:000184">
    <property type="entry name" value="Response regulator 3"/>
    <property type="match status" value="1"/>
</dbReference>
<dbReference type="Gene3D" id="3.40.50.2300">
    <property type="match status" value="1"/>
</dbReference>
<dbReference type="InterPro" id="IPR045279">
    <property type="entry name" value="ARR-like"/>
</dbReference>
<dbReference type="InterPro" id="IPR011006">
    <property type="entry name" value="CheY-like_superfamily"/>
</dbReference>
<dbReference type="InterPro" id="IPR001789">
    <property type="entry name" value="Sig_transdc_resp-reg_receiver"/>
</dbReference>
<dbReference type="PANTHER" id="PTHR43874">
    <property type="entry name" value="TWO-COMPONENT RESPONSE REGULATOR"/>
    <property type="match status" value="1"/>
</dbReference>
<dbReference type="PANTHER" id="PTHR43874:SF62">
    <property type="entry name" value="TWO-COMPONENT RESPONSE REGULATOR ARR6"/>
    <property type="match status" value="1"/>
</dbReference>
<dbReference type="Pfam" id="PF00072">
    <property type="entry name" value="Response_reg"/>
    <property type="match status" value="1"/>
</dbReference>
<dbReference type="SMART" id="SM00448">
    <property type="entry name" value="REC"/>
    <property type="match status" value="1"/>
</dbReference>
<dbReference type="SUPFAM" id="SSF52172">
    <property type="entry name" value="CheY-like"/>
    <property type="match status" value="1"/>
</dbReference>
<dbReference type="PROSITE" id="PS50110">
    <property type="entry name" value="RESPONSE_REGULATORY"/>
    <property type="match status" value="1"/>
</dbReference>
<comment type="function">
    <text evidence="4 5">Functions as a response regulator involved in His-to-Asp phosphorelay signal transduction system. Phosphorylation of the Asp residue in the receiver domain activates the ability of the protein to promote the transcription of target genes. Type-A response regulators seem to act as negative regulators of the cytokinin signaling.</text>
</comment>
<comment type="interaction">
    <interactant intactId="EBI-1100901">
        <id>Q9ZWS6</id>
    </interactant>
    <interactant intactId="EBI-1100725">
        <id>Q67XQ1</id>
        <label>At1g03430</label>
    </interactant>
    <organismsDiffer>false</organismsDiffer>
    <experiments>2</experiments>
</comment>
<comment type="interaction">
    <interactant intactId="EBI-1100901">
        <id>Q9ZWS6</id>
    </interactant>
    <interactant intactId="EBI-4426144">
        <id>Q9C9L2</id>
        <label>TCP15</label>
    </interactant>
    <organismsDiffer>false</organismsDiffer>
    <experiments>3</experiments>
</comment>
<comment type="subcellular location">
    <subcellularLocation>
        <location evidence="3">Nucleus</location>
    </subcellularLocation>
</comment>
<comment type="tissue specificity">
    <text evidence="2 5">Predominantly expressed in roots.</text>
</comment>
<comment type="induction">
    <text evidence="2 6">By cytokinins (BA and zeatin) and nitrate.</text>
</comment>
<comment type="PTM">
    <text>Two-component system major event consists of a His-to-Asp phosphorelay between a sensor histidine kinase (HK) and a response regulator (RR). In plants, the His-to-Asp phosphorelay involves an additional intermediate named Histidine-containing phosphotransfer protein (HPt). This multistep phosphorelay consists of a His-Asp-His-Asp sequential transfer of a phosphate group between first a His and an Asp of the HK protein, followed by the transfer to a conserved His of the HPt protein and finally the transfer to an Asp in the receiver domain of the RR protein.</text>
</comment>
<comment type="similarity">
    <text evidence="7">Belongs to the ARR family. Type-A subfamily.</text>
</comment>
<comment type="sequence caution" evidence="7">
    <conflict type="erroneous gene model prediction">
        <sequence resource="EMBL-CDS" id="BAA34730"/>
    </conflict>
</comment>
<gene>
    <name type="primary">ARR6</name>
    <name type="ordered locus">At5g62920</name>
    <name type="ORF">MQB2.220</name>
    <name type="ORF">MQB2.24</name>
</gene>
<reference key="1">
    <citation type="journal article" date="1998" name="Proc. Natl. Acad. Sci. U.S.A.">
        <title>Response regulators implicated in His-to-Asp phosphotransfer signaling in Arabidopsis.</title>
        <authorList>
            <person name="Imamura A."/>
            <person name="Hanaki N."/>
            <person name="Umeda H."/>
            <person name="Nakamura A."/>
            <person name="Suzuki T."/>
            <person name="Ueguchi C."/>
            <person name="Mizuno T."/>
        </authorList>
    </citation>
    <scope>NUCLEOTIDE SEQUENCE [GENOMIC DNA / MRNA]</scope>
    <scope>FUNCTION</scope>
    <scope>TISSUE SPECIFICITY</scope>
    <source>
        <strain>cv. Columbia</strain>
    </source>
</reference>
<reference key="2">
    <citation type="journal article" date="1998" name="DNA Res.">
        <title>Structural analysis of Arabidopsis thaliana chromosome 5. IV. Sequence features of the regions of 1,456,315 bp covered by nineteen physically assigned P1 and TAC clones.</title>
        <authorList>
            <person name="Sato S."/>
            <person name="Kaneko T."/>
            <person name="Kotani H."/>
            <person name="Nakamura Y."/>
            <person name="Asamizu E."/>
            <person name="Miyajima N."/>
            <person name="Tabata S."/>
        </authorList>
    </citation>
    <scope>NUCLEOTIDE SEQUENCE [LARGE SCALE GENOMIC DNA]</scope>
    <source>
        <strain>cv. Columbia</strain>
    </source>
</reference>
<reference key="3">
    <citation type="journal article" date="2017" name="Plant J.">
        <title>Araport11: a complete reannotation of the Arabidopsis thaliana reference genome.</title>
        <authorList>
            <person name="Cheng C.Y."/>
            <person name="Krishnakumar V."/>
            <person name="Chan A.P."/>
            <person name="Thibaud-Nissen F."/>
            <person name="Schobel S."/>
            <person name="Town C.D."/>
        </authorList>
    </citation>
    <scope>GENOME REANNOTATION</scope>
    <source>
        <strain>cv. Columbia</strain>
    </source>
</reference>
<reference key="4">
    <citation type="journal article" date="2003" name="Science">
        <title>Empirical analysis of transcriptional activity in the Arabidopsis genome.</title>
        <authorList>
            <person name="Yamada K."/>
            <person name="Lim J."/>
            <person name="Dale J.M."/>
            <person name="Chen H."/>
            <person name="Shinn P."/>
            <person name="Palm C.J."/>
            <person name="Southwick A.M."/>
            <person name="Wu H.C."/>
            <person name="Kim C.J."/>
            <person name="Nguyen M."/>
            <person name="Pham P.K."/>
            <person name="Cheuk R.F."/>
            <person name="Karlin-Newmann G."/>
            <person name="Liu S.X."/>
            <person name="Lam B."/>
            <person name="Sakano H."/>
            <person name="Wu T."/>
            <person name="Yu G."/>
            <person name="Miranda M."/>
            <person name="Quach H.L."/>
            <person name="Tripp M."/>
            <person name="Chang C.H."/>
            <person name="Lee J.M."/>
            <person name="Toriumi M.J."/>
            <person name="Chan M.M."/>
            <person name="Tang C.C."/>
            <person name="Onodera C.S."/>
            <person name="Deng J.M."/>
            <person name="Akiyama K."/>
            <person name="Ansari Y."/>
            <person name="Arakawa T."/>
            <person name="Banh J."/>
            <person name="Banno F."/>
            <person name="Bowser L."/>
            <person name="Brooks S.Y."/>
            <person name="Carninci P."/>
            <person name="Chao Q."/>
            <person name="Choy N."/>
            <person name="Enju A."/>
            <person name="Goldsmith A.D."/>
            <person name="Gurjal M."/>
            <person name="Hansen N.F."/>
            <person name="Hayashizaki Y."/>
            <person name="Johnson-Hopson C."/>
            <person name="Hsuan V.W."/>
            <person name="Iida K."/>
            <person name="Karnes M."/>
            <person name="Khan S."/>
            <person name="Koesema E."/>
            <person name="Ishida J."/>
            <person name="Jiang P.X."/>
            <person name="Jones T."/>
            <person name="Kawai J."/>
            <person name="Kamiya A."/>
            <person name="Meyers C."/>
            <person name="Nakajima M."/>
            <person name="Narusaka M."/>
            <person name="Seki M."/>
            <person name="Sakurai T."/>
            <person name="Satou M."/>
            <person name="Tamse R."/>
            <person name="Vaysberg M."/>
            <person name="Wallender E.K."/>
            <person name="Wong C."/>
            <person name="Yamamura Y."/>
            <person name="Yuan S."/>
            <person name="Shinozaki K."/>
            <person name="Davis R.W."/>
            <person name="Theologis A."/>
            <person name="Ecker J.R."/>
        </authorList>
    </citation>
    <scope>NUCLEOTIDE SEQUENCE [LARGE SCALE MRNA]</scope>
    <source>
        <strain>cv. Columbia</strain>
    </source>
</reference>
<reference key="5">
    <citation type="journal article" date="1998" name="FEBS Lett.">
        <title>Expression of Arabidopsis response regulator homologs is induced by cytokinins and nitrate.</title>
        <authorList>
            <person name="Taniguchi M."/>
            <person name="Kiba T."/>
            <person name="Sakakibara H."/>
            <person name="Ueguchi C."/>
            <person name="Mizuno T."/>
            <person name="Sugiyama T."/>
        </authorList>
    </citation>
    <scope>INDUCTION</scope>
</reference>
<reference key="6">
    <citation type="journal article" date="2000" name="Plant Physiol.">
        <title>Characterization of the response of the Arabidopsis response regulator gene family to cytokinin.</title>
        <authorList>
            <person name="D'Agostino I.B."/>
            <person name="Deruere J."/>
            <person name="Kieber J.J."/>
        </authorList>
    </citation>
    <scope>TISSUE SPECIFICITY</scope>
    <scope>INDUCTION</scope>
</reference>
<reference key="7">
    <citation type="journal article" date="2001" name="Nature">
        <title>Two-component circuitry in Arabidopsis cytokinin signal transduction.</title>
        <authorList>
            <person name="Hwang I."/>
            <person name="Sheen J."/>
        </authorList>
    </citation>
    <scope>SUBCELLULAR LOCATION</scope>
</reference>
<reference key="8">
    <citation type="journal article" date="2004" name="Plant Cell">
        <title>Type-A Arabidopsis response regulators are partially redundant negative regulators of cytokinin signaling.</title>
        <authorList>
            <person name="To J.P.C."/>
            <person name="Haberer G."/>
            <person name="Ferreira F.J."/>
            <person name="Deruere J."/>
            <person name="Mason M.G."/>
            <person name="Schaller G.E."/>
            <person name="Alonso J.M."/>
            <person name="Ecker J.R."/>
            <person name="Kieber J.J."/>
        </authorList>
    </citation>
    <scope>FUNCTION</scope>
</reference>
<proteinExistence type="evidence at protein level"/>
<accession>Q9ZWS6</accession>
<accession>Q9ZWS8</accession>
<sequence length="186" mass="21239">MAEVMLPRKMEILNHSSKFGSPDPLHVLAVDDSHVDRKFIERLLRVSSCKVTVVDSATRALQYLGLDVEEKSVGFEDLKVNLIMTDYSMPGMTGYELLKKIKESSAFREVPVVIMSSENILPRIDRCLEEGAEDFLLKPVKLSDVKRLRDSLMKVEDLSFTKSIQKRELETENVYPVHSQLKRAKI</sequence>
<feature type="chain" id="PRO_0000081427" description="Two-component response regulator ARR6">
    <location>
        <begin position="1"/>
        <end position="186"/>
    </location>
</feature>
<feature type="domain" description="Response regulatory" evidence="1">
    <location>
        <begin position="26"/>
        <end position="153"/>
    </location>
</feature>
<feature type="modified residue" description="4-aspartylphosphate" evidence="1">
    <location>
        <position position="86"/>
    </location>
</feature>
<keyword id="KW-0932">Cytokinin signaling pathway</keyword>
<keyword id="KW-0539">Nucleus</keyword>
<keyword id="KW-0597">Phosphoprotein</keyword>
<keyword id="KW-1185">Reference proteome</keyword>
<keyword id="KW-0804">Transcription</keyword>
<keyword id="KW-0805">Transcription regulation</keyword>
<keyword id="KW-0902">Two-component regulatory system</keyword>
<organism>
    <name type="scientific">Arabidopsis thaliana</name>
    <name type="common">Mouse-ear cress</name>
    <dbReference type="NCBI Taxonomy" id="3702"/>
    <lineage>
        <taxon>Eukaryota</taxon>
        <taxon>Viridiplantae</taxon>
        <taxon>Streptophyta</taxon>
        <taxon>Embryophyta</taxon>
        <taxon>Tracheophyta</taxon>
        <taxon>Spermatophyta</taxon>
        <taxon>Magnoliopsida</taxon>
        <taxon>eudicotyledons</taxon>
        <taxon>Gunneridae</taxon>
        <taxon>Pentapetalae</taxon>
        <taxon>rosids</taxon>
        <taxon>malvids</taxon>
        <taxon>Brassicales</taxon>
        <taxon>Brassicaceae</taxon>
        <taxon>Camelineae</taxon>
        <taxon>Arabidopsis</taxon>
    </lineage>
</organism>
<evidence type="ECO:0000255" key="1">
    <source>
        <dbReference type="PROSITE-ProRule" id="PRU00169"/>
    </source>
</evidence>
<evidence type="ECO:0000269" key="2">
    <source>
    </source>
</evidence>
<evidence type="ECO:0000269" key="3">
    <source>
    </source>
</evidence>
<evidence type="ECO:0000269" key="4">
    <source>
    </source>
</evidence>
<evidence type="ECO:0000269" key="5">
    <source>
    </source>
</evidence>
<evidence type="ECO:0000269" key="6">
    <source>
    </source>
</evidence>
<evidence type="ECO:0000305" key="7"/>
<protein>
    <recommendedName>
        <fullName>Two-component response regulator ARR6</fullName>
    </recommendedName>
</protein>